<proteinExistence type="inferred from homology"/>
<reference key="1">
    <citation type="journal article" date="1997" name="J. Bacteriol.">
        <title>Evolutionary analysis of the hisCGABdFDEHI gene cluster from the archaeon Sulfolobus solfataricus P2.</title>
        <authorList>
            <person name="Charlebois R.L."/>
            <person name="Sensen C.W."/>
            <person name="Doolittle W.F."/>
            <person name="Brown J.R."/>
        </authorList>
    </citation>
    <scope>NUCLEOTIDE SEQUENCE [GENOMIC DNA]</scope>
    <source>
        <strain>ATCC 35092 / DSM 1617 / JCM 11322 / P2</strain>
    </source>
</reference>
<reference key="2">
    <citation type="journal article" date="2000" name="Genome">
        <title>Gene content and organization of a 281-kbp contig from the genome of the extremely thermophilic archaeon, Sulfolobus solfataricus P2.</title>
        <authorList>
            <person name="Charlebois R.L."/>
            <person name="Singh R.K."/>
            <person name="Chan-Weiher C.C.-Y."/>
            <person name="Allard G."/>
            <person name="Chow C."/>
            <person name="Confalonieri F."/>
            <person name="Curtis B."/>
            <person name="Duguet M."/>
            <person name="Erauso G."/>
            <person name="Faguy D."/>
            <person name="Gaasterland T."/>
            <person name="Garrett R.A."/>
            <person name="Gordon P."/>
            <person name="Jeffries A.C."/>
            <person name="Kozera C."/>
            <person name="Kushwaha N."/>
            <person name="Lafleur E."/>
            <person name="Medina N."/>
            <person name="Peng X."/>
            <person name="Penny S.L."/>
            <person name="She Q."/>
            <person name="St Jean A."/>
            <person name="van der Oost J."/>
            <person name="Young F."/>
            <person name="Zivanovic Y."/>
            <person name="Doolittle W.F."/>
            <person name="Ragan M.A."/>
            <person name="Sensen C.W."/>
        </authorList>
    </citation>
    <scope>NUCLEOTIDE SEQUENCE [LARGE SCALE GENOMIC DNA]</scope>
    <source>
        <strain>ATCC 35092 / DSM 1617 / JCM 11322 / P2</strain>
    </source>
</reference>
<reference key="3">
    <citation type="journal article" date="2001" name="Proc. Natl. Acad. Sci. U.S.A.">
        <title>The complete genome of the crenarchaeon Sulfolobus solfataricus P2.</title>
        <authorList>
            <person name="She Q."/>
            <person name="Singh R.K."/>
            <person name="Confalonieri F."/>
            <person name="Zivanovic Y."/>
            <person name="Allard G."/>
            <person name="Awayez M.J."/>
            <person name="Chan-Weiher C.C.-Y."/>
            <person name="Clausen I.G."/>
            <person name="Curtis B.A."/>
            <person name="De Moors A."/>
            <person name="Erauso G."/>
            <person name="Fletcher C."/>
            <person name="Gordon P.M.K."/>
            <person name="Heikamp-de Jong I."/>
            <person name="Jeffries A.C."/>
            <person name="Kozera C.J."/>
            <person name="Medina N."/>
            <person name="Peng X."/>
            <person name="Thi-Ngoc H.P."/>
            <person name="Redder P."/>
            <person name="Schenk M.E."/>
            <person name="Theriault C."/>
            <person name="Tolstrup N."/>
            <person name="Charlebois R.L."/>
            <person name="Doolittle W.F."/>
            <person name="Duguet M."/>
            <person name="Gaasterland T."/>
            <person name="Garrett R.A."/>
            <person name="Ragan M.A."/>
            <person name="Sensen C.W."/>
            <person name="Van der Oost J."/>
        </authorList>
    </citation>
    <scope>NUCLEOTIDE SEQUENCE [LARGE SCALE GENOMIC DNA]</scope>
    <source>
        <strain>ATCC 35092 / DSM 1617 / JCM 11322 / P2</strain>
    </source>
</reference>
<evidence type="ECO:0000250" key="1"/>
<dbReference type="EC" id="4.3.2.10"/>
<dbReference type="EC" id="3.5.1.2"/>
<dbReference type="EMBL" id="U82227">
    <property type="protein sequence ID" value="AAB63025.1"/>
    <property type="molecule type" value="Genomic_DNA"/>
</dbReference>
<dbReference type="EMBL" id="Y18930">
    <property type="protein sequence ID" value="CAB57700.1"/>
    <property type="molecule type" value="Genomic_DNA"/>
</dbReference>
<dbReference type="EMBL" id="AE006641">
    <property type="protein sequence ID" value="AAK40911.1"/>
    <property type="molecule type" value="Genomic_DNA"/>
</dbReference>
<dbReference type="PIR" id="H90206">
    <property type="entry name" value="H90206"/>
</dbReference>
<dbReference type="RefSeq" id="WP_009991119.1">
    <property type="nucleotide sequence ID" value="NC_002754.1"/>
</dbReference>
<dbReference type="SMR" id="O33777"/>
<dbReference type="FunCoup" id="O33777">
    <property type="interactions" value="89"/>
</dbReference>
<dbReference type="STRING" id="273057.SSO0600"/>
<dbReference type="MEROPS" id="C26.965"/>
<dbReference type="PaxDb" id="273057-SSO0600"/>
<dbReference type="EnsemblBacteria" id="AAK40911">
    <property type="protein sequence ID" value="AAK40911"/>
    <property type="gene ID" value="SSO0600"/>
</dbReference>
<dbReference type="GeneID" id="44129601"/>
<dbReference type="KEGG" id="sso:SSO0600"/>
<dbReference type="PATRIC" id="fig|273057.12.peg.607"/>
<dbReference type="eggNOG" id="arCOG00089">
    <property type="taxonomic scope" value="Archaea"/>
</dbReference>
<dbReference type="HOGENOM" id="CLU_071837_2_2_2"/>
<dbReference type="InParanoid" id="O33777"/>
<dbReference type="PhylomeDB" id="O33777"/>
<dbReference type="UniPathway" id="UPA00031">
    <property type="reaction ID" value="UER00010"/>
</dbReference>
<dbReference type="Proteomes" id="UP000001974">
    <property type="component" value="Chromosome"/>
</dbReference>
<dbReference type="GO" id="GO:0005737">
    <property type="term" value="C:cytoplasm"/>
    <property type="evidence" value="ECO:0007669"/>
    <property type="project" value="UniProtKB-SubCell"/>
</dbReference>
<dbReference type="GO" id="GO:0004359">
    <property type="term" value="F:glutaminase activity"/>
    <property type="evidence" value="ECO:0007669"/>
    <property type="project" value="UniProtKB-EC"/>
</dbReference>
<dbReference type="GO" id="GO:0000107">
    <property type="term" value="F:imidazoleglycerol-phosphate synthase activity"/>
    <property type="evidence" value="ECO:0000318"/>
    <property type="project" value="GO_Central"/>
</dbReference>
<dbReference type="GO" id="GO:0016829">
    <property type="term" value="F:lyase activity"/>
    <property type="evidence" value="ECO:0007669"/>
    <property type="project" value="UniProtKB-KW"/>
</dbReference>
<dbReference type="GO" id="GO:0000105">
    <property type="term" value="P:L-histidine biosynthetic process"/>
    <property type="evidence" value="ECO:0007669"/>
    <property type="project" value="UniProtKB-UniRule"/>
</dbReference>
<dbReference type="CDD" id="cd01748">
    <property type="entry name" value="GATase1_IGP_Synthase"/>
    <property type="match status" value="1"/>
</dbReference>
<dbReference type="Gene3D" id="3.40.50.880">
    <property type="match status" value="1"/>
</dbReference>
<dbReference type="HAMAP" id="MF_00278">
    <property type="entry name" value="HisH"/>
    <property type="match status" value="1"/>
</dbReference>
<dbReference type="InterPro" id="IPR029062">
    <property type="entry name" value="Class_I_gatase-like"/>
</dbReference>
<dbReference type="InterPro" id="IPR017926">
    <property type="entry name" value="GATASE"/>
</dbReference>
<dbReference type="InterPro" id="IPR010139">
    <property type="entry name" value="Imidazole-glycPsynth_HisH"/>
</dbReference>
<dbReference type="NCBIfam" id="TIGR01855">
    <property type="entry name" value="IMP_synth_hisH"/>
    <property type="match status" value="1"/>
</dbReference>
<dbReference type="PANTHER" id="PTHR42701">
    <property type="entry name" value="IMIDAZOLE GLYCEROL PHOSPHATE SYNTHASE SUBUNIT HISH"/>
    <property type="match status" value="1"/>
</dbReference>
<dbReference type="PANTHER" id="PTHR42701:SF1">
    <property type="entry name" value="IMIDAZOLE GLYCEROL PHOSPHATE SYNTHASE SUBUNIT HISH"/>
    <property type="match status" value="1"/>
</dbReference>
<dbReference type="Pfam" id="PF00117">
    <property type="entry name" value="GATase"/>
    <property type="match status" value="1"/>
</dbReference>
<dbReference type="PIRSF" id="PIRSF000495">
    <property type="entry name" value="Amidotransf_hisH"/>
    <property type="match status" value="1"/>
</dbReference>
<dbReference type="SUPFAM" id="SSF52317">
    <property type="entry name" value="Class I glutamine amidotransferase-like"/>
    <property type="match status" value="1"/>
</dbReference>
<dbReference type="PROSITE" id="PS51273">
    <property type="entry name" value="GATASE_TYPE_1"/>
    <property type="match status" value="1"/>
</dbReference>
<sequence length="199" mass="22533">MKALVINYGVGNLYSISSALKRVGFEVTIDNKPRNDYDLIVFPGVGAFSAVAEFILRYRELFNDLRRSGTNFLGVCLGMQIMFEKGTEGKESNGLGWFKGIVDKINANVKLPHIGWDLVFEVKDSCELTYGLDKKYVYYVHSYVAYPTSGDYVYMKSQYGIEYPALVCDKNVVGTQFHPEKSSNTGKIFLENLKGWIKR</sequence>
<protein>
    <recommendedName>
        <fullName>Imidazole glycerol phosphate synthase subunit HisH</fullName>
        <ecNumber>4.3.2.10</ecNumber>
    </recommendedName>
    <alternativeName>
        <fullName>IGP synthase glutaminase subunit</fullName>
        <ecNumber>3.5.1.2</ecNumber>
    </alternativeName>
    <alternativeName>
        <fullName>IGP synthase subunit HisH</fullName>
    </alternativeName>
    <alternativeName>
        <fullName>ImGP synthase subunit HisH</fullName>
        <shortName>IGPS subunit HisH</shortName>
    </alternativeName>
</protein>
<accession>O33777</accession>
<name>HIS5_SACS2</name>
<feature type="chain" id="PRO_0000152469" description="Imidazole glycerol phosphate synthase subunit HisH">
    <location>
        <begin position="1"/>
        <end position="199"/>
    </location>
</feature>
<feature type="domain" description="Glutamine amidotransferase type-1">
    <location>
        <begin position="2"/>
        <end position="199"/>
    </location>
</feature>
<feature type="active site" description="Nucleophile" evidence="1">
    <location>
        <position position="76"/>
    </location>
</feature>
<feature type="active site" evidence="1">
    <location>
        <position position="178"/>
    </location>
</feature>
<feature type="active site" evidence="1">
    <location>
        <position position="180"/>
    </location>
</feature>
<comment type="function">
    <text evidence="1">IGPS catalyzes the conversion of PRFAR and glutamine to IGP, AICAR and glutamate. The HisH subunit catalyzes the hydrolysis of glutamine to glutamate and ammonia as part of the synthesis of IGP and AICAR. The resulting ammonia molecule is channeled to the active site of HisF (By similarity).</text>
</comment>
<comment type="catalytic activity">
    <reaction>
        <text>5-[(5-phospho-1-deoxy-D-ribulos-1-ylimino)methylamino]-1-(5-phospho-beta-D-ribosyl)imidazole-4-carboxamide + L-glutamine = D-erythro-1-(imidazol-4-yl)glycerol 3-phosphate + 5-amino-1-(5-phospho-beta-D-ribosyl)imidazole-4-carboxamide + L-glutamate + H(+)</text>
        <dbReference type="Rhea" id="RHEA:24793"/>
        <dbReference type="ChEBI" id="CHEBI:15378"/>
        <dbReference type="ChEBI" id="CHEBI:29985"/>
        <dbReference type="ChEBI" id="CHEBI:58278"/>
        <dbReference type="ChEBI" id="CHEBI:58359"/>
        <dbReference type="ChEBI" id="CHEBI:58475"/>
        <dbReference type="ChEBI" id="CHEBI:58525"/>
        <dbReference type="EC" id="4.3.2.10"/>
    </reaction>
</comment>
<comment type="catalytic activity">
    <reaction>
        <text>L-glutamine + H2O = L-glutamate + NH4(+)</text>
        <dbReference type="Rhea" id="RHEA:15889"/>
        <dbReference type="ChEBI" id="CHEBI:15377"/>
        <dbReference type="ChEBI" id="CHEBI:28938"/>
        <dbReference type="ChEBI" id="CHEBI:29985"/>
        <dbReference type="ChEBI" id="CHEBI:58359"/>
        <dbReference type="EC" id="3.5.1.2"/>
    </reaction>
</comment>
<comment type="pathway">
    <text>Amino-acid biosynthesis; L-histidine biosynthesis; L-histidine from 5-phospho-alpha-D-ribose 1-diphosphate: step 5/9.</text>
</comment>
<comment type="subunit">
    <text evidence="1">Heterodimer of HisH and HisF.</text>
</comment>
<comment type="subcellular location">
    <subcellularLocation>
        <location evidence="1">Cytoplasm</location>
    </subcellularLocation>
</comment>
<organism>
    <name type="scientific">Saccharolobus solfataricus (strain ATCC 35092 / DSM 1617 / JCM 11322 / P2)</name>
    <name type="common">Sulfolobus solfataricus</name>
    <dbReference type="NCBI Taxonomy" id="273057"/>
    <lineage>
        <taxon>Archaea</taxon>
        <taxon>Thermoproteota</taxon>
        <taxon>Thermoprotei</taxon>
        <taxon>Sulfolobales</taxon>
        <taxon>Sulfolobaceae</taxon>
        <taxon>Saccharolobus</taxon>
    </lineage>
</organism>
<keyword id="KW-0028">Amino-acid biosynthesis</keyword>
<keyword id="KW-0963">Cytoplasm</keyword>
<keyword id="KW-0315">Glutamine amidotransferase</keyword>
<keyword id="KW-0368">Histidine biosynthesis</keyword>
<keyword id="KW-0378">Hydrolase</keyword>
<keyword id="KW-0456">Lyase</keyword>
<keyword id="KW-1185">Reference proteome</keyword>
<gene>
    <name type="primary">hisH</name>
    <name type="ordered locus">SSO0600</name>
    <name type="ORF">C08_050</name>
</gene>